<keyword id="KW-0903">Direct protein sequencing</keyword>
<keyword id="KW-0349">Heme</keyword>
<keyword id="KW-0408">Iron</keyword>
<keyword id="KW-0479">Metal-binding</keyword>
<keyword id="KW-0561">Oxygen transport</keyword>
<keyword id="KW-0813">Transport</keyword>
<name>GLB2_GLYDI</name>
<comment type="subunit">
    <text>Monomer.</text>
</comment>
<comment type="miscellaneous">
    <text>The sequence of this fragment differs from the corresponding region of the major monomeric component at 9 of the 42 known positions.</text>
</comment>
<comment type="similarity">
    <text evidence="2">Belongs to the globin family.</text>
</comment>
<sequence length="45" mass="4559">GLSAAERQVVASCWKDIAGADXGAGVGKEXLIKFISAAPEMAAVF</sequence>
<dbReference type="PIR" id="A02539">
    <property type="entry name" value="GGNW3B"/>
</dbReference>
<dbReference type="GO" id="GO:0020037">
    <property type="term" value="F:heme binding"/>
    <property type="evidence" value="ECO:0007669"/>
    <property type="project" value="InterPro"/>
</dbReference>
<dbReference type="GO" id="GO:0046872">
    <property type="term" value="F:metal ion binding"/>
    <property type="evidence" value="ECO:0007669"/>
    <property type="project" value="UniProtKB-KW"/>
</dbReference>
<dbReference type="GO" id="GO:0019825">
    <property type="term" value="F:oxygen binding"/>
    <property type="evidence" value="ECO:0007669"/>
    <property type="project" value="InterPro"/>
</dbReference>
<dbReference type="GO" id="GO:0005344">
    <property type="term" value="F:oxygen carrier activity"/>
    <property type="evidence" value="ECO:0007669"/>
    <property type="project" value="UniProtKB-KW"/>
</dbReference>
<dbReference type="Gene3D" id="1.10.490.10">
    <property type="entry name" value="Globins"/>
    <property type="match status" value="1"/>
</dbReference>
<dbReference type="InterPro" id="IPR000971">
    <property type="entry name" value="Globin"/>
</dbReference>
<dbReference type="InterPro" id="IPR009050">
    <property type="entry name" value="Globin-like_sf"/>
</dbReference>
<dbReference type="InterPro" id="IPR012292">
    <property type="entry name" value="Globin/Proto"/>
</dbReference>
<dbReference type="SUPFAM" id="SSF46458">
    <property type="entry name" value="Globin-like"/>
    <property type="match status" value="1"/>
</dbReference>
<dbReference type="PROSITE" id="PS01033">
    <property type="entry name" value="GLOBIN"/>
    <property type="match status" value="1"/>
</dbReference>
<organism>
    <name type="scientific">Glycera dibranchiata</name>
    <name type="common">Bloodworm</name>
    <dbReference type="NCBI Taxonomy" id="6350"/>
    <lineage>
        <taxon>Eukaryota</taxon>
        <taxon>Metazoa</taxon>
        <taxon>Spiralia</taxon>
        <taxon>Lophotrochozoa</taxon>
        <taxon>Annelida</taxon>
        <taxon>Polychaeta</taxon>
        <taxon>Errantia</taxon>
        <taxon>Phyllodocida</taxon>
        <taxon>Glyceridae</taxon>
        <taxon>Glycera</taxon>
    </lineage>
</organism>
<protein>
    <recommendedName>
        <fullName>Globin, minor monomeric component</fullName>
    </recommendedName>
</protein>
<accession>P02217</accession>
<reference key="1">
    <citation type="journal article" date="1971" name="Biochim. Biophys. Acta">
        <title>Partial sequence of the NH2-terminal segment of Glycera hemoglobin. Homology with sperm whale myoglobin.</title>
        <authorList>
            <person name="Li S.L."/>
            <person name="Riggs A.F."/>
        </authorList>
    </citation>
    <scope>PROTEIN SEQUENCE</scope>
</reference>
<proteinExistence type="evidence at protein level"/>
<feature type="chain" id="PRO_0000052501" description="Globin, minor monomeric component">
    <location>
        <begin position="1"/>
        <end position="45" status="greater than"/>
    </location>
</feature>
<feature type="domain" description="Globin" evidence="1">
    <location>
        <begin position="1"/>
        <end position="45"/>
    </location>
</feature>
<feature type="unsure residue">
    <location>
        <position position="13"/>
    </location>
</feature>
<feature type="non-terminal residue">
    <location>
        <position position="45"/>
    </location>
</feature>
<evidence type="ECO:0000255" key="1">
    <source>
        <dbReference type="PROSITE-ProRule" id="PRU00238"/>
    </source>
</evidence>
<evidence type="ECO:0000305" key="2"/>